<protein>
    <recommendedName>
        <fullName>Protease LasA</fullName>
        <ecNumber>3.4.24.-</ecNumber>
    </recommendedName>
    <alternativeName>
        <fullName>Staphylolytic protease</fullName>
    </alternativeName>
</protein>
<feature type="signal peptide" evidence="7">
    <location>
        <begin position="1"/>
        <end position="31"/>
    </location>
</feature>
<feature type="propeptide" id="PRO_0000026812" evidence="4 6">
    <location>
        <begin position="32"/>
        <end position="236"/>
    </location>
</feature>
<feature type="chain" id="PRO_0000026813" description="Protease LasA">
    <location>
        <begin position="237"/>
        <end position="418"/>
    </location>
</feature>
<feature type="active site" description="Proton donor/acceptor" evidence="9">
    <location>
        <position position="317"/>
    </location>
</feature>
<feature type="active site" description="Proton donor/acceptor" evidence="9">
    <location>
        <position position="356"/>
    </location>
</feature>
<feature type="binding site" evidence="3">
    <location>
        <position position="259"/>
    </location>
    <ligand>
        <name>Zn(2+)</name>
        <dbReference type="ChEBI" id="CHEBI:29105"/>
    </ligand>
</feature>
<feature type="binding site" evidence="3">
    <location>
        <position position="272"/>
    </location>
    <ligand>
        <name>Zn(2+)</name>
        <dbReference type="ChEBI" id="CHEBI:29105"/>
    </ligand>
</feature>
<feature type="binding site" evidence="3">
    <location>
        <position position="358"/>
    </location>
    <ligand>
        <name>Zn(2+)</name>
        <dbReference type="ChEBI" id="CHEBI:29105"/>
    </ligand>
</feature>
<feature type="disulfide bond" evidence="11 12">
    <location>
        <begin position="301"/>
        <end position="347"/>
    </location>
</feature>
<feature type="disulfide bond" evidence="11 12">
    <location>
        <begin position="391"/>
        <end position="406"/>
    </location>
</feature>
<feature type="mutagenesis site" description="Loss of staphylolytic activity; mature protein is still produced." evidence="5">
    <original>H</original>
    <variation>A</variation>
    <location>
        <position position="356"/>
    </location>
</feature>
<feature type="sequence conflict" description="In Ref. 3; AAC12656." evidence="8" ref="3">
    <original>L</original>
    <variation>V</variation>
    <location>
        <position position="80"/>
    </location>
</feature>
<feature type="sequence conflict" description="In Ref. 1; AAA25873." evidence="8" ref="1">
    <original>P</original>
    <variation>R</variation>
    <location>
        <position position="128"/>
    </location>
</feature>
<feature type="sequence conflict" description="In Ref. 3; AAC12656." evidence="8" ref="3">
    <original>V</original>
    <variation>A</variation>
    <location>
        <position position="192"/>
    </location>
</feature>
<feature type="sequence conflict" description="In Ref. 1; AAA25873." evidence="8" ref="1">
    <original>QGGNPLG</original>
    <variation>ARRQSAR</variation>
    <location>
        <begin position="196"/>
        <end position="202"/>
    </location>
</feature>
<feature type="sequence conflict" description="In Ref. 3; AAC12656." evidence="8" ref="3">
    <original>S</original>
    <variation>R</variation>
    <location>
        <position position="223"/>
    </location>
</feature>
<feature type="sequence conflict" description="In Ref. 1; AAA25873." evidence="8" ref="1">
    <original>SNT</original>
    <variation>FEH</variation>
    <location>
        <begin position="260"/>
        <end position="262"/>
    </location>
</feature>
<feature type="turn" evidence="13">
    <location>
        <begin position="240"/>
        <end position="242"/>
    </location>
</feature>
<feature type="strand" evidence="13">
    <location>
        <begin position="252"/>
        <end position="255"/>
    </location>
</feature>
<feature type="strand" evidence="13">
    <location>
        <begin position="263"/>
        <end position="267"/>
    </location>
</feature>
<feature type="strand" evidence="13">
    <location>
        <begin position="270"/>
        <end position="276"/>
    </location>
</feature>
<feature type="strand" evidence="13">
    <location>
        <begin position="286"/>
        <end position="288"/>
    </location>
</feature>
<feature type="strand" evidence="13">
    <location>
        <begin position="290"/>
        <end position="299"/>
    </location>
</feature>
<feature type="strand" evidence="13">
    <location>
        <begin position="302"/>
        <end position="306"/>
    </location>
</feature>
<feature type="strand" evidence="13">
    <location>
        <begin position="310"/>
        <end position="320"/>
    </location>
</feature>
<feature type="strand" evidence="13">
    <location>
        <begin position="334"/>
        <end position="338"/>
    </location>
</feature>
<feature type="helix" evidence="13">
    <location>
        <begin position="342"/>
        <end position="345"/>
    </location>
</feature>
<feature type="turn" evidence="13">
    <location>
        <begin position="346"/>
        <end position="348"/>
    </location>
</feature>
<feature type="strand" evidence="13">
    <location>
        <begin position="353"/>
        <end position="355"/>
    </location>
</feature>
<feature type="strand" evidence="13">
    <location>
        <begin position="357"/>
        <end position="363"/>
    </location>
</feature>
<feature type="strand" evidence="13">
    <location>
        <begin position="378"/>
        <end position="381"/>
    </location>
</feature>
<feature type="turn" evidence="13">
    <location>
        <begin position="391"/>
        <end position="393"/>
    </location>
</feature>
<feature type="strand" evidence="13">
    <location>
        <begin position="394"/>
        <end position="398"/>
    </location>
</feature>
<feature type="turn" evidence="13">
    <location>
        <begin position="399"/>
        <end position="401"/>
    </location>
</feature>
<evidence type="ECO:0000269" key="1">
    <source>
    </source>
</evidence>
<evidence type="ECO:0000269" key="2">
    <source>
    </source>
</evidence>
<evidence type="ECO:0000269" key="3">
    <source>
    </source>
</evidence>
<evidence type="ECO:0000269" key="4">
    <source>
    </source>
</evidence>
<evidence type="ECO:0000269" key="5">
    <source>
    </source>
</evidence>
<evidence type="ECO:0000269" key="6">
    <source>
    </source>
</evidence>
<evidence type="ECO:0000303" key="7">
    <source>
    </source>
</evidence>
<evidence type="ECO:0000305" key="8"/>
<evidence type="ECO:0000305" key="9">
    <source>
    </source>
</evidence>
<evidence type="ECO:0000305" key="10">
    <source>
    </source>
</evidence>
<evidence type="ECO:0007744" key="11">
    <source>
        <dbReference type="PDB" id="3IT5"/>
    </source>
</evidence>
<evidence type="ECO:0007744" key="12">
    <source>
        <dbReference type="PDB" id="3IT7"/>
    </source>
</evidence>
<evidence type="ECO:0007829" key="13">
    <source>
        <dbReference type="PDB" id="3IT5"/>
    </source>
</evidence>
<name>LASA_PSEAE</name>
<keyword id="KW-0002">3D-structure</keyword>
<keyword id="KW-0903">Direct protein sequencing</keyword>
<keyword id="KW-1015">Disulfide bond</keyword>
<keyword id="KW-0378">Hydrolase</keyword>
<keyword id="KW-0479">Metal-binding</keyword>
<keyword id="KW-0482">Metalloprotease</keyword>
<keyword id="KW-0645">Protease</keyword>
<keyword id="KW-1185">Reference proteome</keyword>
<keyword id="KW-0964">Secreted</keyword>
<keyword id="KW-0732">Signal</keyword>
<keyword id="KW-0843">Virulence</keyword>
<keyword id="KW-0862">Zinc</keyword>
<keyword id="KW-0865">Zymogen</keyword>
<sequence>MQHKRSRAMASPRSPFLFVLLALAVGGTANAHDDGLPAFRYSAELLGQLQLPSVALPLNDDLFLYGRDAEAFDLEAYLALNAPALRDKSEYLEHWSGYYSINPKVLLTLMVMQSGPLGAPDERALAAPLGRLSAKRGFDAQVRDVLQQLSRRYYGFEEYQLRQAAARKAVGEDGLNAASAALLGLLREGAKVSAVQGGNPLGAYAQTFQRLFGTPAAELLQPSNRVARQLQAKAALAPPSNLMQLPWRQGYSWQPNGAHSNTGSGYPYSSFDASYDWPRWGSATYSVVAAHAGTVRVLSRCQVRVTHPSGWATNYYHMDQIQVSNGQQVSADTKLGVYAGNINTALCEGGSSTGPHLHFSLLYNGAFVSLQGASFGPYRINVGTSNYDNDCRRYYFYNQSAGTTHCAFRPLYNPGLAL</sequence>
<dbReference type="EC" id="3.4.24.-"/>
<dbReference type="EMBL" id="M20982">
    <property type="protein sequence ID" value="AAA25873.1"/>
    <property type="status" value="ALT_SEQ"/>
    <property type="molecule type" value="Genomic_DNA"/>
</dbReference>
<dbReference type="EMBL" id="X55904">
    <property type="protein sequence ID" value="CAA39397.1"/>
    <property type="status" value="ALT_INIT"/>
    <property type="molecule type" value="Genomic_DNA"/>
</dbReference>
<dbReference type="EMBL" id="U68175">
    <property type="protein sequence ID" value="AAC12656.1"/>
    <property type="molecule type" value="Genomic_DNA"/>
</dbReference>
<dbReference type="EMBL" id="AE004091">
    <property type="protein sequence ID" value="AAG05260.1"/>
    <property type="molecule type" value="Genomic_DNA"/>
</dbReference>
<dbReference type="PIR" id="A46076">
    <property type="entry name" value="A46076"/>
</dbReference>
<dbReference type="PIR" id="F83411">
    <property type="entry name" value="F83411"/>
</dbReference>
<dbReference type="RefSeq" id="NP_250562.1">
    <property type="nucleotide sequence ID" value="NC_002516.2"/>
</dbReference>
<dbReference type="RefSeq" id="WP_010895585.1">
    <property type="nucleotide sequence ID" value="NZ_QZGE01000003.1"/>
</dbReference>
<dbReference type="PDB" id="3IT5">
    <property type="method" value="X-ray"/>
    <property type="resolution" value="2.00 A"/>
    <property type="chains" value="A/B/E/G=237-418"/>
</dbReference>
<dbReference type="PDB" id="3IT7">
    <property type="method" value="X-ray"/>
    <property type="resolution" value="2.14 A"/>
    <property type="chains" value="A/B=237-418"/>
</dbReference>
<dbReference type="PDBsum" id="3IT5"/>
<dbReference type="PDBsum" id="3IT7"/>
<dbReference type="SMR" id="P14789"/>
<dbReference type="STRING" id="208964.PA1871"/>
<dbReference type="ChEMBL" id="CHEMBL5169224"/>
<dbReference type="MEROPS" id="M23.002"/>
<dbReference type="PaxDb" id="208964-PA1871"/>
<dbReference type="GeneID" id="878260"/>
<dbReference type="KEGG" id="pae:PA1871"/>
<dbReference type="PATRIC" id="fig|208964.12.peg.1948"/>
<dbReference type="PseudoCAP" id="PA1871"/>
<dbReference type="HOGENOM" id="CLU_656977_0_0_6"/>
<dbReference type="InParanoid" id="P14789"/>
<dbReference type="OrthoDB" id="6188067at2"/>
<dbReference type="BioCyc" id="PAER208964:G1FZ6-1911-MONOMER"/>
<dbReference type="BRENDA" id="3.4.24.B16">
    <property type="organism ID" value="5087"/>
</dbReference>
<dbReference type="EvolutionaryTrace" id="P14789"/>
<dbReference type="Proteomes" id="UP000002438">
    <property type="component" value="Chromosome"/>
</dbReference>
<dbReference type="GO" id="GO:0005615">
    <property type="term" value="C:extracellular space"/>
    <property type="evidence" value="ECO:0000314"/>
    <property type="project" value="PseudoCAP"/>
</dbReference>
<dbReference type="GO" id="GO:0004175">
    <property type="term" value="F:endopeptidase activity"/>
    <property type="evidence" value="ECO:0000314"/>
    <property type="project" value="CACAO"/>
</dbReference>
<dbReference type="GO" id="GO:0046872">
    <property type="term" value="F:metal ion binding"/>
    <property type="evidence" value="ECO:0007669"/>
    <property type="project" value="UniProtKB-KW"/>
</dbReference>
<dbReference type="GO" id="GO:0004222">
    <property type="term" value="F:metalloendopeptidase activity"/>
    <property type="evidence" value="ECO:0000318"/>
    <property type="project" value="GO_Central"/>
</dbReference>
<dbReference type="GO" id="GO:0009253">
    <property type="term" value="P:peptidoglycan catabolic process"/>
    <property type="evidence" value="ECO:0000314"/>
    <property type="project" value="CACAO"/>
</dbReference>
<dbReference type="GO" id="GO:0015628">
    <property type="term" value="P:protein secretion by the type II secretion system"/>
    <property type="evidence" value="ECO:0000314"/>
    <property type="project" value="PseudoCAP"/>
</dbReference>
<dbReference type="GO" id="GO:0043952">
    <property type="term" value="P:protein transport by the Sec complex"/>
    <property type="evidence" value="ECO:0000314"/>
    <property type="project" value="PseudoCAP"/>
</dbReference>
<dbReference type="GO" id="GO:0006508">
    <property type="term" value="P:proteolysis"/>
    <property type="evidence" value="ECO:0000314"/>
    <property type="project" value="PseudoCAP"/>
</dbReference>
<dbReference type="CDD" id="cd12797">
    <property type="entry name" value="M23_peptidase"/>
    <property type="match status" value="1"/>
</dbReference>
<dbReference type="FunFam" id="2.70.70.10:FF:000044">
    <property type="entry name" value="Protease LasA"/>
    <property type="match status" value="1"/>
</dbReference>
<dbReference type="Gene3D" id="2.70.70.10">
    <property type="entry name" value="Glucose Permease (Domain IIA)"/>
    <property type="match status" value="1"/>
</dbReference>
<dbReference type="InterPro" id="IPR050570">
    <property type="entry name" value="Cell_wall_metabolism_enzyme"/>
</dbReference>
<dbReference type="InterPro" id="IPR011055">
    <property type="entry name" value="Dup_hybrid_motif"/>
</dbReference>
<dbReference type="InterPro" id="IPR000841">
    <property type="entry name" value="Pept_M23A_Blytic"/>
</dbReference>
<dbReference type="InterPro" id="IPR016047">
    <property type="entry name" value="Peptidase_M23"/>
</dbReference>
<dbReference type="PANTHER" id="PTHR21666:SF288">
    <property type="entry name" value="CELL DIVISION PROTEIN YTFB"/>
    <property type="match status" value="1"/>
</dbReference>
<dbReference type="PANTHER" id="PTHR21666">
    <property type="entry name" value="PEPTIDASE-RELATED"/>
    <property type="match status" value="1"/>
</dbReference>
<dbReference type="Pfam" id="PF01551">
    <property type="entry name" value="Peptidase_M23"/>
    <property type="match status" value="1"/>
</dbReference>
<dbReference type="PRINTS" id="PR00933">
    <property type="entry name" value="BLYTICPTASE"/>
</dbReference>
<dbReference type="SUPFAM" id="SSF51261">
    <property type="entry name" value="Duplicated hybrid motif"/>
    <property type="match status" value="1"/>
</dbReference>
<gene>
    <name type="primary">lasA</name>
    <name type="ordered locus">PA1871</name>
</gene>
<reference key="1">
    <citation type="journal article" date="1988" name="J. Bacteriol.">
        <title>Nucleotide sequence and expression in Escherichia coli of the Pseudomonas aeruginosa lasA gene.</title>
        <authorList>
            <person name="Schad P.A."/>
            <person name="Iglewski B.H."/>
        </authorList>
    </citation>
    <scope>NUCLEOTIDE SEQUENCE [GENOMIC DNA]</scope>
    <source>
        <strain>PAO</strain>
    </source>
</reference>
<reference key="2">
    <citation type="journal article" date="1990" name="Nucleic Acids Res.">
        <title>Revised nucleotide sequence of the lasA gene from Pseudomonas aeruginosa PAO1.</title>
        <authorList>
            <person name="Darzins A."/>
            <person name="Peters J.E."/>
            <person name="Galloway D.R."/>
        </authorList>
    </citation>
    <scope>NUCLEOTIDE SEQUENCE [GENOMIC DNA]</scope>
    <scope>SEQUENCE REVISION</scope>
    <source>
        <strain>ATCC 15692 / DSM 22644 / CIP 104116 / JCM 14847 / LMG 12228 / 1C / PRS 101 / PAO1</strain>
    </source>
</reference>
<reference key="3">
    <citation type="journal article" date="1996" name="J. Bacteriol.">
        <title>A substitution at His-120 in the LasA protease of Pseudomonas aeruginosa blocks enzymatic activity without affecting propeptide processing or extracellular secretion.</title>
        <authorList>
            <person name="Gustin J.K."/>
            <person name="Kessler E."/>
            <person name="Ohman D.E."/>
        </authorList>
    </citation>
    <scope>NUCLEOTIDE SEQUENCE [GENOMIC DNA]</scope>
    <scope>PARTIAL PROTEIN SEQUENCE</scope>
    <scope>FUNCTION</scope>
    <scope>PROTEOLYTIC CLEAVAGE</scope>
    <scope>DISRUPTION PHENOTYPE</scope>
    <scope>MUTAGENESIS OF HIS-356</scope>
    <source>
        <strain>FRD1</strain>
    </source>
</reference>
<reference key="4">
    <citation type="journal article" date="1998" name="J. Bacteriol.">
        <title>Secretion of elastinolytic enzymes and their propeptides by Pseudomonas aeruginosa.</title>
        <authorList>
            <person name="Braun P."/>
            <person name="de Groot A."/>
            <person name="Bitter W."/>
            <person name="Tommassen J."/>
        </authorList>
    </citation>
    <scope>PROTEIN SEQUENCE OF 32-41</scope>
    <scope>SUBCELLULAR LOCATION</scope>
    <scope>PROTEOLYTIC CLEAVAGE</scope>
    <source>
        <strain>PAO1 / PAO25</strain>
    </source>
</reference>
<reference key="5">
    <citation type="journal article" date="1990" name="J. Bacteriol.">
        <title>Purification and characterization of an active fragment of the LasA protein from Pseudomonas aeruginosa: enhancement of elastase activity.</title>
        <authorList>
            <person name="Peters J.E."/>
            <person name="Galloway D.R."/>
        </authorList>
    </citation>
    <scope>PROTEIN SEQUENCE OF 237-243</scope>
    <scope>FUNCTION</scope>
    <scope>SUBCELLULAR LOCATION</scope>
    <source>
        <strain>ATCC 15692 / DSM 22644 / CIP 104116 / JCM 14847 / LMG 12228 / 1C / PRS 101 / PAO1</strain>
        <strain>PA220</strain>
    </source>
</reference>
<reference key="6">
    <citation type="journal article" date="2000" name="Nature">
        <title>Complete genome sequence of Pseudomonas aeruginosa PAO1, an opportunistic pathogen.</title>
        <authorList>
            <person name="Stover C.K."/>
            <person name="Pham X.-Q.T."/>
            <person name="Erwin A.L."/>
            <person name="Mizoguchi S.D."/>
            <person name="Warrener P."/>
            <person name="Hickey M.J."/>
            <person name="Brinkman F.S.L."/>
            <person name="Hufnagle W.O."/>
            <person name="Kowalik D.J."/>
            <person name="Lagrou M."/>
            <person name="Garber R.L."/>
            <person name="Goltry L."/>
            <person name="Tolentino E."/>
            <person name="Westbrock-Wadman S."/>
            <person name="Yuan Y."/>
            <person name="Brody L.L."/>
            <person name="Coulter S.N."/>
            <person name="Folger K.R."/>
            <person name="Kas A."/>
            <person name="Larbig K."/>
            <person name="Lim R.M."/>
            <person name="Smith K.A."/>
            <person name="Spencer D.H."/>
            <person name="Wong G.K.-S."/>
            <person name="Wu Z."/>
            <person name="Paulsen I.T."/>
            <person name="Reizer J."/>
            <person name="Saier M.H. Jr."/>
            <person name="Hancock R.E.W."/>
            <person name="Lory S."/>
            <person name="Olson M.V."/>
        </authorList>
    </citation>
    <scope>NUCLEOTIDE SEQUENCE [LARGE SCALE GENOMIC DNA]</scope>
    <source>
        <strain>ATCC 15692 / DSM 22644 / CIP 104116 / JCM 14847 / LMG 12228 / 1C / PRS 101 / PAO1</strain>
    </source>
</reference>
<reference key="7">
    <citation type="journal article" date="1992" name="J. Bacteriol.">
        <title>Efficient production and processing of elastase and LasA by Pseudomonas aeruginosa require zinc and calcium ions.</title>
        <authorList>
            <person name="Olson J.C."/>
            <person name="Ohman D.E."/>
        </authorList>
    </citation>
    <scope>FUNCTION</scope>
    <scope>SUBCELLULAR LOCATION</scope>
    <scope>INDUCTION</scope>
    <source>
        <strain>ATCC 15692 / DSM 22644 / CIP 104116 / JCM 14847 / LMG 12228 / 1C / PRS 101 / PAO1</strain>
        <strain>DG1</strain>
        <strain>FRD1 / FRD2</strain>
    </source>
</reference>
<reference key="8">
    <citation type="journal article" date="2001" name="Eur. J. Biochem.">
        <title>Hydrolysis of glycine-containing elastin pentapeptides by LasA, a metalloelastase from Pseudomonas aeruginosa.</title>
        <authorList>
            <person name="Vessillier S."/>
            <person name="Delolme F."/>
            <person name="Bernillon J."/>
            <person name="Saulnier J."/>
            <person name="Wallach J."/>
        </authorList>
    </citation>
    <scope>FUNCTION</scope>
    <scope>SUBSTRATE SPECIFICITY</scope>
    <scope>SUBCELLULAR LOCATION</scope>
    <source>
        <strain>PA220</strain>
    </source>
</reference>
<reference key="9">
    <citation type="journal article" date="2010" name="J. Mol. Biol.">
        <title>Crystal structure of the LasA virulence factor from Pseudomonas aeruginosa: substrate specificity and mechanism of M23 metallopeptidases.</title>
        <authorList>
            <person name="Spencer J."/>
            <person name="Murphy L.M."/>
            <person name="Conners R."/>
            <person name="Sessions R.B."/>
            <person name="Gamblin S.J."/>
        </authorList>
    </citation>
    <scope>X-RAY CRYSTALLOGRAPHY (2.00 ANGSTROMS) OF 237-418 IN COMPLEX WITH ZINC WITH OR WITHOUT PRODUCT ANALOG</scope>
    <scope>PROTEIN SEQUENCE OF 237-246</scope>
    <scope>BIOPHYSICOCHEMICAL PROPERTIES</scope>
    <scope>REACTION MECHANISM</scope>
    <scope>MASS SPECTROMETRY</scope>
    <scope>ACTIVE SITE</scope>
    <scope>DISULFIDE BOND</scope>
    <source>
        <strain>ATCC 15692 / DSM 22644 / CIP 104116 / JCM 14847 / LMG 12228 / 1C / PRS 101 / PAO1</strain>
    </source>
</reference>
<proteinExistence type="evidence at protein level"/>
<accession>P14789</accession>
<accession>P72165</accession>
<accession>Q9I2M5</accession>
<comment type="function">
    <text evidence="1 2 3 4 5">Involved in proteolysis and elastolysis (degradation of the host protein elastin). Has staphylolytic activity (degrades pentaglycine cross-links in cell wall peptidoglycan), preferring Gly-Gly-|-X substrates where X is Ala or Gly (PubMed:11179971). Enhances the elastolytic but not proteolytic activity of elastase (lasB) and elastolytic activity of other proteases (PubMed:2110137). Degradation of host elastin is likely to contribute to the pathogenicity of P.aeruginosa. While either His-317 or His-356 can abstract a proton in the hydrolysis reaction, the same residue performs both functions in a given catalytic cycle, with the other stabilizing the catalytic intermediate (PubMed:20026068).</text>
</comment>
<comment type="cofactor">
    <cofactor evidence="3">
        <name>Zn(2+)</name>
        <dbReference type="ChEBI" id="CHEBI:29105"/>
    </cofactor>
    <text evidence="3">Binds 1 zinc ion per subunit.</text>
</comment>
<comment type="biophysicochemical properties">
    <kinetics>
        <KM evidence="3">58 uM for Dabsyl-Leu-Gly-Gly-Gly-Ala-Edans at pH 9</KM>
        <KM evidence="3">61 uM for Dabsyl-Leu-Gly-Gly-Gly-Ala-Edans at pH 8</KM>
        <KM evidence="3">105 uM for Dabsyl-Leu-Gly-Gly-Gly-Ala-Edans at pH 7</KM>
        <text evidence="3">kcat is 5.1 sec(-1), 5.3 sec(-1), 1.7 sec(-1) at pH 9, 8 and 7 respectively.</text>
    </kinetics>
    <phDependence>
        <text evidence="3">Optimum pH is 8-9, inactive at pH 6 and below.</text>
    </phDependence>
</comment>
<comment type="subcellular location">
    <subcellularLocation>
        <location evidence="1 2 4 6">Secreted</location>
    </subcellularLocation>
    <text evidence="6">Secreted in an Xcp-dependent fashion (a type II secretion pathway).</text>
</comment>
<comment type="induction">
    <text evidence="2">Optimal protein expression in vivo requires both Zn(2+) and Ca(2+) during growth (at protein level).</text>
</comment>
<comment type="PTM">
    <text evidence="5 6">Processing of pro-LasA can occur extracellularly and requires elastase (lasB) (PubMed:9642203). Secretion and processing may be linked (PubMed:8932318).</text>
</comment>
<comment type="mass spectrometry"/>
<comment type="disruption phenotype">
    <text evidence="5">Loss of staphylolytic activity (lysis of heat-killed S.aureus).</text>
</comment>
<comment type="similarity">
    <text evidence="8">Belongs to the peptidase M23A family.</text>
</comment>
<comment type="caution">
    <text evidence="10">Partial protein sequence was obtained following expression in E.coli, not P.aeruginosa.</text>
</comment>
<comment type="sequence caution" evidence="8">
    <conflict type="erroneous termination">
        <sequence resource="EMBL-CDS" id="AAA25873"/>
    </conflict>
    <text>Truncated C-terminus.</text>
</comment>
<comment type="sequence caution" evidence="8">
    <conflict type="frameshift">
        <sequence resource="EMBL-CDS" id="AAA25873"/>
    </conflict>
</comment>
<comment type="sequence caution" evidence="8">
    <conflict type="erroneous initiation">
        <sequence resource="EMBL-CDS" id="CAA39397"/>
    </conflict>
    <text>Truncated N-terminus.</text>
</comment>
<organism>
    <name type="scientific">Pseudomonas aeruginosa (strain ATCC 15692 / DSM 22644 / CIP 104116 / JCM 14847 / LMG 12228 / 1C / PRS 101 / PAO1)</name>
    <dbReference type="NCBI Taxonomy" id="208964"/>
    <lineage>
        <taxon>Bacteria</taxon>
        <taxon>Pseudomonadati</taxon>
        <taxon>Pseudomonadota</taxon>
        <taxon>Gammaproteobacteria</taxon>
        <taxon>Pseudomonadales</taxon>
        <taxon>Pseudomonadaceae</taxon>
        <taxon>Pseudomonas</taxon>
    </lineage>
</organism>